<keyword id="KW-0963">Cytoplasm</keyword>
<keyword id="KW-0227">DNA damage</keyword>
<keyword id="KW-0234">DNA repair</keyword>
<keyword id="KW-0597">Phosphoprotein</keyword>
<keyword id="KW-1185">Reference proteome</keyword>
<keyword id="KW-0833">Ubl conjugation pathway</keyword>
<keyword id="KW-0834">Unfolded protein response</keyword>
<proteinExistence type="evidence at protein level"/>
<organism>
    <name type="scientific">Rattus norvegicus</name>
    <name type="common">Rat</name>
    <dbReference type="NCBI Taxonomy" id="10116"/>
    <lineage>
        <taxon>Eukaryota</taxon>
        <taxon>Metazoa</taxon>
        <taxon>Chordata</taxon>
        <taxon>Craniata</taxon>
        <taxon>Vertebrata</taxon>
        <taxon>Euteleostomi</taxon>
        <taxon>Mammalia</taxon>
        <taxon>Eutheria</taxon>
        <taxon>Euarchontoglires</taxon>
        <taxon>Glires</taxon>
        <taxon>Rodentia</taxon>
        <taxon>Myomorpha</taxon>
        <taxon>Muroidea</taxon>
        <taxon>Muridae</taxon>
        <taxon>Murinae</taxon>
        <taxon>Rattus</taxon>
    </lineage>
</organism>
<reference key="1">
    <citation type="journal article" date="2002" name="Gene">
        <title>A new subfamily of structurally related human F-box proteins.</title>
        <authorList>
            <person name="Ilyin G.P."/>
            <person name="Serandour A.L."/>
            <person name="Pigeon C."/>
            <person name="Rialland M."/>
            <person name="Glaise D."/>
            <person name="Guguen-Guillouzo C."/>
        </authorList>
    </citation>
    <scope>NUCLEOTIDE SEQUENCE [MRNA]</scope>
    <scope>DEVELOPMENTAL STAGE</scope>
    <source>
        <strain>Sprague-Dawley</strain>
    </source>
</reference>
<reference key="2">
    <citation type="journal article" date="2004" name="Genome Res.">
        <title>The status, quality, and expansion of the NIH full-length cDNA project: the Mammalian Gene Collection (MGC).</title>
        <authorList>
            <consortium name="The MGC Project Team"/>
        </authorList>
    </citation>
    <scope>NUCLEOTIDE SEQUENCE [LARGE SCALE MRNA]</scope>
    <source>
        <tissue>Pituitary</tissue>
    </source>
</reference>
<reference key="3">
    <citation type="journal article" date="2012" name="Nat. Commun.">
        <title>Quantitative maps of protein phosphorylation sites across 14 different rat organs and tissues.</title>
        <authorList>
            <person name="Lundby A."/>
            <person name="Secher A."/>
            <person name="Lage K."/>
            <person name="Nordsborg N.B."/>
            <person name="Dmytriyev A."/>
            <person name="Lundby C."/>
            <person name="Olsen J.V."/>
        </authorList>
    </citation>
    <scope>PHOSPHORYLATION [LARGE SCALE ANALYSIS] AT SER-275; SER-278 AND SER-283</scope>
    <scope>IDENTIFICATION BY MASS SPECTROMETRY [LARGE SCALE ANALYSIS]</scope>
</reference>
<protein>
    <recommendedName>
        <fullName>F-box only protein 6</fullName>
    </recommendedName>
    <alternativeName>
        <fullName>F-box only protein 6b</fullName>
    </alternativeName>
    <alternativeName>
        <fullName>F-box protein that recognizes sugar chains 2</fullName>
    </alternativeName>
    <alternativeName>
        <fullName>F-box/G-domain protein 2</fullName>
    </alternativeName>
</protein>
<feature type="chain" id="PRO_0000119884" description="F-box only protein 6">
    <location>
        <begin position="1"/>
        <end position="284"/>
    </location>
</feature>
<feature type="domain" description="F-box" evidence="4">
    <location>
        <begin position="1"/>
        <end position="48"/>
    </location>
</feature>
<feature type="domain" description="FBA" evidence="5">
    <location>
        <begin position="69"/>
        <end position="250"/>
    </location>
</feature>
<feature type="modified residue" description="Phosphoserine" evidence="2">
    <location>
        <position position="249"/>
    </location>
</feature>
<feature type="modified residue" description="Phosphoserine" evidence="3">
    <location>
        <position position="268"/>
    </location>
</feature>
<feature type="modified residue" description="Phosphoserine" evidence="8">
    <location>
        <position position="275"/>
    </location>
</feature>
<feature type="modified residue" description="Phosphoserine" evidence="8">
    <location>
        <position position="278"/>
    </location>
</feature>
<feature type="modified residue" description="Phosphoserine" evidence="8">
    <location>
        <position position="283"/>
    </location>
</feature>
<feature type="sequence conflict" description="In Ref. 2; AAH63148." evidence="7" ref="2">
    <original>K</original>
    <variation>E</variation>
    <location>
        <position position="147"/>
    </location>
</feature>
<accession>Q923V4</accession>
<accession>Q6P512</accession>
<evidence type="ECO:0000250" key="1"/>
<evidence type="ECO:0000250" key="2">
    <source>
        <dbReference type="UniProtKB" id="Q9NRD1"/>
    </source>
</evidence>
<evidence type="ECO:0000250" key="3">
    <source>
        <dbReference type="UniProtKB" id="Q9QZN4"/>
    </source>
</evidence>
<evidence type="ECO:0000255" key="4">
    <source>
        <dbReference type="PROSITE-ProRule" id="PRU00080"/>
    </source>
</evidence>
<evidence type="ECO:0000255" key="5">
    <source>
        <dbReference type="PROSITE-ProRule" id="PRU00482"/>
    </source>
</evidence>
<evidence type="ECO:0000269" key="6">
    <source>
    </source>
</evidence>
<evidence type="ECO:0000305" key="7"/>
<evidence type="ECO:0007744" key="8">
    <source>
    </source>
</evidence>
<sequence length="284" mass="32786">MVNINELPENILLELFTHVPAPQLLRNCRLVCSLWRDLIDVMTLWKRKSLREGFVTKDRDEPVDDWKIFYILCSLQRNLLRNPCAEENLRSWRIDSNGGDEWKVESLPGDHGTSFPDTKVKKYFVTSYGMCLKSQMVDLKAEGYSEKLLDTVRPDIVVKDWFAPRADCGCTYHLRVQLASADYIVLASFEPPPVTIEQWNDASWQEISHTFSNYPPGVRHILFQHGGKDTQFWKGWYGPRVTNSSIIVSHRTAKNPAPARTLPEEDTSNRRKILSFGSWEDLSP</sequence>
<gene>
    <name type="primary">Fbxo6</name>
    <name type="synonym">Fbg2</name>
    <name type="synonym">Fbs2</name>
    <name type="synonym">Fbxo6b</name>
</gene>
<dbReference type="EMBL" id="AF393484">
    <property type="protein sequence ID" value="AAK70899.1"/>
    <property type="molecule type" value="mRNA"/>
</dbReference>
<dbReference type="EMBL" id="BC063148">
    <property type="protein sequence ID" value="AAH63148.1"/>
    <property type="molecule type" value="mRNA"/>
</dbReference>
<dbReference type="RefSeq" id="NP_620272.3">
    <property type="nucleotide sequence ID" value="NM_138917.3"/>
</dbReference>
<dbReference type="RefSeq" id="XP_006239434.1">
    <property type="nucleotide sequence ID" value="XM_006239372.5"/>
</dbReference>
<dbReference type="RefSeq" id="XP_006239435.1">
    <property type="nucleotide sequence ID" value="XM_006239373.5"/>
</dbReference>
<dbReference type="RefSeq" id="XP_006239436.1">
    <property type="nucleotide sequence ID" value="XM_006239374.5"/>
</dbReference>
<dbReference type="RefSeq" id="XP_006239437.1">
    <property type="nucleotide sequence ID" value="XM_006239375.5"/>
</dbReference>
<dbReference type="RefSeq" id="XP_063143220.1">
    <property type="nucleotide sequence ID" value="XM_063287150.1"/>
</dbReference>
<dbReference type="SMR" id="Q923V4"/>
<dbReference type="BioGRID" id="251408">
    <property type="interactions" value="1"/>
</dbReference>
<dbReference type="FunCoup" id="Q923V4">
    <property type="interactions" value="1153"/>
</dbReference>
<dbReference type="STRING" id="10116.ENSRNOP00000012301"/>
<dbReference type="iPTMnet" id="Q923V4"/>
<dbReference type="PhosphoSitePlus" id="Q923V4"/>
<dbReference type="PaxDb" id="10116-ENSRNOP00000012301"/>
<dbReference type="Ensembl" id="ENSRNOT00000096248.1">
    <property type="protein sequence ID" value="ENSRNOP00000082391.1"/>
    <property type="gene ID" value="ENSRNOG00000009217.5"/>
</dbReference>
<dbReference type="GeneID" id="192351"/>
<dbReference type="KEGG" id="rno:192351"/>
<dbReference type="AGR" id="RGD:620418"/>
<dbReference type="CTD" id="26270"/>
<dbReference type="RGD" id="620418">
    <property type="gene designation" value="Fbxo6"/>
</dbReference>
<dbReference type="eggNOG" id="ENOG502RZA6">
    <property type="taxonomic scope" value="Eukaryota"/>
</dbReference>
<dbReference type="GeneTree" id="ENSGT00940000159980"/>
<dbReference type="HOGENOM" id="CLU_068548_0_0_1"/>
<dbReference type="InParanoid" id="Q923V4"/>
<dbReference type="OMA" id="HIFFQHG"/>
<dbReference type="OrthoDB" id="1107553at2759"/>
<dbReference type="PhylomeDB" id="Q923V4"/>
<dbReference type="TreeFam" id="TF320527"/>
<dbReference type="Reactome" id="R-RNO-8951664">
    <property type="pathway name" value="Neddylation"/>
</dbReference>
<dbReference type="Reactome" id="R-RNO-983168">
    <property type="pathway name" value="Antigen processing: Ubiquitination &amp; Proteasome degradation"/>
</dbReference>
<dbReference type="UniPathway" id="UPA00143"/>
<dbReference type="PRO" id="PR:Q923V4"/>
<dbReference type="Proteomes" id="UP000002494">
    <property type="component" value="Chromosome 5"/>
</dbReference>
<dbReference type="Bgee" id="ENSRNOG00000009217">
    <property type="expression patterns" value="Expressed in skeletal muscle tissue and 19 other cell types or tissues"/>
</dbReference>
<dbReference type="GO" id="GO:0005737">
    <property type="term" value="C:cytoplasm"/>
    <property type="evidence" value="ECO:0000250"/>
    <property type="project" value="UniProtKB"/>
</dbReference>
<dbReference type="GO" id="GO:0044322">
    <property type="term" value="C:endoplasmic reticulum quality control compartment"/>
    <property type="evidence" value="ECO:0000266"/>
    <property type="project" value="RGD"/>
</dbReference>
<dbReference type="GO" id="GO:0019005">
    <property type="term" value="C:SCF ubiquitin ligase complex"/>
    <property type="evidence" value="ECO:0000250"/>
    <property type="project" value="UniProtKB"/>
</dbReference>
<dbReference type="GO" id="GO:0030246">
    <property type="term" value="F:carbohydrate binding"/>
    <property type="evidence" value="ECO:0000266"/>
    <property type="project" value="RGD"/>
</dbReference>
<dbReference type="GO" id="GO:0061630">
    <property type="term" value="F:ubiquitin protein ligase activity"/>
    <property type="evidence" value="ECO:0007669"/>
    <property type="project" value="Ensembl"/>
</dbReference>
<dbReference type="GO" id="GO:0006281">
    <property type="term" value="P:DNA repair"/>
    <property type="evidence" value="ECO:0007669"/>
    <property type="project" value="UniProtKB-KW"/>
</dbReference>
<dbReference type="GO" id="GO:0036503">
    <property type="term" value="P:ERAD pathway"/>
    <property type="evidence" value="ECO:0000250"/>
    <property type="project" value="UniProtKB"/>
</dbReference>
<dbReference type="GO" id="GO:0006516">
    <property type="term" value="P:glycoprotein catabolic process"/>
    <property type="evidence" value="ECO:0000266"/>
    <property type="project" value="RGD"/>
</dbReference>
<dbReference type="GO" id="GO:0016567">
    <property type="term" value="P:protein ubiquitination"/>
    <property type="evidence" value="ECO:0007669"/>
    <property type="project" value="UniProtKB-UniPathway"/>
</dbReference>
<dbReference type="GO" id="GO:0006986">
    <property type="term" value="P:response to unfolded protein"/>
    <property type="evidence" value="ECO:0007669"/>
    <property type="project" value="UniProtKB-KW"/>
</dbReference>
<dbReference type="GO" id="GO:0031146">
    <property type="term" value="P:SCF-dependent proteasomal ubiquitin-dependent protein catabolic process"/>
    <property type="evidence" value="ECO:0000250"/>
    <property type="project" value="UniProtKB"/>
</dbReference>
<dbReference type="GO" id="GO:0006511">
    <property type="term" value="P:ubiquitin-dependent protein catabolic process"/>
    <property type="evidence" value="ECO:0000266"/>
    <property type="project" value="RGD"/>
</dbReference>
<dbReference type="CDD" id="cd22168">
    <property type="entry name" value="F-box_FBXO6-like"/>
    <property type="match status" value="1"/>
</dbReference>
<dbReference type="FunFam" id="2.60.120.260:FF:000012">
    <property type="entry name" value="F-box only protein 2"/>
    <property type="match status" value="1"/>
</dbReference>
<dbReference type="FunFam" id="1.20.1280.50:FF:000002">
    <property type="entry name" value="F-box only protein 44"/>
    <property type="match status" value="1"/>
</dbReference>
<dbReference type="Gene3D" id="1.20.1280.50">
    <property type="match status" value="1"/>
</dbReference>
<dbReference type="Gene3D" id="2.60.120.260">
    <property type="entry name" value="Galactose-binding domain-like"/>
    <property type="match status" value="1"/>
</dbReference>
<dbReference type="InterPro" id="IPR007397">
    <property type="entry name" value="F-box-assoc_dom"/>
</dbReference>
<dbReference type="InterPro" id="IPR036047">
    <property type="entry name" value="F-box-like_dom_sf"/>
</dbReference>
<dbReference type="InterPro" id="IPR001810">
    <property type="entry name" value="F-box_dom"/>
</dbReference>
<dbReference type="InterPro" id="IPR039752">
    <property type="entry name" value="F-box_only"/>
</dbReference>
<dbReference type="InterPro" id="IPR008979">
    <property type="entry name" value="Galactose-bd-like_sf"/>
</dbReference>
<dbReference type="PANTHER" id="PTHR12125:SF12">
    <property type="entry name" value="F-BOX ONLY PROTEIN 6"/>
    <property type="match status" value="1"/>
</dbReference>
<dbReference type="PANTHER" id="PTHR12125">
    <property type="entry name" value="F-BOX ONLY PROTEIN 6-LIKE PROTEIN"/>
    <property type="match status" value="1"/>
</dbReference>
<dbReference type="Pfam" id="PF12937">
    <property type="entry name" value="F-box-like"/>
    <property type="match status" value="1"/>
</dbReference>
<dbReference type="Pfam" id="PF04300">
    <property type="entry name" value="FBA"/>
    <property type="match status" value="1"/>
</dbReference>
<dbReference type="SMART" id="SM01198">
    <property type="entry name" value="FBA"/>
    <property type="match status" value="1"/>
</dbReference>
<dbReference type="SMART" id="SM00256">
    <property type="entry name" value="FBOX"/>
    <property type="match status" value="1"/>
</dbReference>
<dbReference type="SUPFAM" id="SSF81383">
    <property type="entry name" value="F-box domain"/>
    <property type="match status" value="1"/>
</dbReference>
<dbReference type="SUPFAM" id="SSF49785">
    <property type="entry name" value="Galactose-binding domain-like"/>
    <property type="match status" value="1"/>
</dbReference>
<dbReference type="PROSITE" id="PS51114">
    <property type="entry name" value="FBA"/>
    <property type="match status" value="1"/>
</dbReference>
<dbReference type="PROSITE" id="PS50181">
    <property type="entry name" value="FBOX"/>
    <property type="match status" value="1"/>
</dbReference>
<comment type="function">
    <text evidence="1">Substrate-recognition component of some SCF (SKP1-CUL1-F-box protein)-type E3 ubiquitin ligase complexes. Involved in endoplasmic reticulum-associated degradation pathway (ERAD) for misfolded lumenal proteins by recognizing and binding sugar chains on unfolded glycoproteins that are retrotranslocated into the cytosol and promoting their ubiquitination and subsequent degradation. Able to recognize and bind denatured glycoproteins, which are modified with not only high-mannose but also complex-type oligosaccharides. Also recognizes sulfated glycans. Also involved in DNA damage response by specifically recognizing activated CHEK1 (phosphorylated on 'Ser-345'), promoting its ubiquitination and degradation. Ubiquitination of CHEK1 is required to ensure that activated CHEK1 does not accumulate as cells progress through S phase, or when replication forks encounter transient impediments during normal DNA replication (By similarity).</text>
</comment>
<comment type="pathway">
    <text>Protein modification; protein ubiquitination.</text>
</comment>
<comment type="subunit">
    <text evidence="1">Part of a SCF (SKP1-cullin-F-box) protein ligase complex. Interacts with VCP, CHEK1 and CUL1 (By similarity).</text>
</comment>
<comment type="subcellular location">
    <subcellularLocation>
        <location evidence="1">Cytoplasm</location>
    </subcellularLocation>
</comment>
<comment type="developmental stage">
    <text evidence="6">Abundantly expressed in 14.5-day fetal liver. Expression decreases during late liver development and stays at low levels until birth. Expression increases 24 hours after birth and reaches highest levels in adult liver.</text>
</comment>
<name>FBX6_RAT</name>